<evidence type="ECO:0000250" key="1">
    <source>
        <dbReference type="UniProtKB" id="O88487"/>
    </source>
</evidence>
<evidence type="ECO:0000250" key="2">
    <source>
        <dbReference type="UniProtKB" id="Q13409"/>
    </source>
</evidence>
<evidence type="ECO:0000256" key="3">
    <source>
        <dbReference type="SAM" id="MobiDB-lite"/>
    </source>
</evidence>
<evidence type="ECO:0000269" key="4">
    <source>
    </source>
</evidence>
<evidence type="ECO:0000269" key="5">
    <source>
    </source>
</evidence>
<evidence type="ECO:0000269" key="6">
    <source>
    </source>
</evidence>
<evidence type="ECO:0000269" key="7">
    <source>
    </source>
</evidence>
<evidence type="ECO:0000269" key="8">
    <source>
    </source>
</evidence>
<evidence type="ECO:0000269" key="9">
    <source>
    </source>
</evidence>
<evidence type="ECO:0000269" key="10">
    <source>
    </source>
</evidence>
<evidence type="ECO:0000269" key="11">
    <source>
    </source>
</evidence>
<evidence type="ECO:0000303" key="12">
    <source>
    </source>
</evidence>
<evidence type="ECO:0000305" key="13"/>
<evidence type="ECO:0007744" key="14">
    <source>
    </source>
</evidence>
<evidence type="ECO:0007829" key="15">
    <source>
        <dbReference type="PDB" id="2PG1"/>
    </source>
</evidence>
<protein>
    <recommendedName>
        <fullName>Cytoplasmic dynein 1 intermediate chain 2</fullName>
    </recommendedName>
    <alternativeName>
        <fullName>Cytoplasmic dynein intermediate chain 2</fullName>
    </alternativeName>
    <alternativeName>
        <fullName>Dynein intermediate chain 2, cytosolic</fullName>
        <shortName>DH IC-2</shortName>
    </alternativeName>
</protein>
<comment type="function">
    <text evidence="5">Acts as one of several non-catalytic accessory components of the cytoplasmic dynein 1 complex that are thought to be involved in linking dynein to cargos and to adapter proteins that regulate dynein function (PubMed:11340075). Cytoplasmic dynein 1 acts as a motor for the intracellular retrograde motility of vesicles and organelles along microtubules (PubMed:11340075). The intermediate chains mediate the binding of dynein to dynactin via its 150 kDa component (p150-glued) DCTN1 (PubMed:11340075). Involved in membrane-transport, such as Golgi apparatus, late endosomes and lysosomes (PubMed:11340075).</text>
</comment>
<comment type="subunit">
    <text evidence="1 4 5 6 7 9 10 11">Homodimer (PubMed:10893223, PubMed:17279546, PubMed:8688562, PubMed:9790665). The cytoplasmic dynein 1 complex consists of two catalytic heavy chains (HCs) and a number of non-catalytic subunits presented by intermediate chains (ICs), light intermediate chains (LICs) and light chains (LCs); the composition seems to vary in respect to the IC, LIC and LC composition (PubMed:10893223, PubMed:17279546, PubMed:8688562, PubMed:9790665). The heavy chain homodimer serves as a scaffold for the probable homodimeric assembly of the respective non-catalytic subunits (PubMed:10893223, PubMed:17279546, PubMed:8688562, PubMed:9790665). The ICs and LICs bind directly to the HC dimer and the LCs assemble on the IC dimer (PubMed:10893223, PubMed:17279546, PubMed:8688562, PubMed:9790665). Interacts with DYNLT3 (PubMed:17965411). Interacts with DYNLT1 (PubMed:17965411). Interacts (dephosphorylated at Ser-90) with DCTN1 (PubMed:11340075, PubMed:8522607). Interacts with BICD2 (By similarity). Interacts with SPEF2 (By similarity). Interacts with CFAP61 (By similarity).</text>
</comment>
<comment type="subcellular location">
    <subcellularLocation>
        <location evidence="5">Cytoplasm</location>
        <location evidence="5">Cytoskeleton</location>
    </subcellularLocation>
    <subcellularLocation>
        <location evidence="1">Cytoplasm</location>
    </subcellularLocation>
    <text evidence="1">Detected in the cytoplasm of pachytene spermatocytes. Localizes to the manchette in elongating spermatids.</text>
</comment>
<comment type="alternative products">
    <event type="alternative splicing"/>
    <isoform>
        <id>Q62871-1</id>
        <name>2A</name>
        <sequence type="displayed"/>
    </isoform>
    <isoform>
        <id>Q62871-2</id>
        <name>2B</name>
        <sequence type="described" ref="VSP_001339"/>
    </isoform>
    <isoform>
        <id>Q62871-3</id>
        <name>2C</name>
        <sequence type="described" ref="VSP_001339 VSP_001340"/>
    </isoform>
    <text>Additional isoforms seem to exist.</text>
</comment>
<comment type="tissue specificity">
    <text>Skeletal muscle, testis, kidney, brain, heart and spleen.</text>
</comment>
<comment type="PTM">
    <text evidence="5">The phosphorylation status of Ser-90 appears to be involved in dynactin-dependent target binding.</text>
</comment>
<comment type="PTM">
    <text evidence="1">Pyrophosphorylation by 5-diphosphoinositol pentakisphosphate (5-IP7) promotes interaction with DCTN1. Serine pyrophosphorylation is achieved by Mg(2+)-dependent, but enzyme independent transfer of a beta-phosphate from a inositol pyrophosphate to a pre-phosphorylated serine residue.</text>
</comment>
<comment type="similarity">
    <text evidence="13">Belongs to the dynein intermediate chain family.</text>
</comment>
<sequence length="638" mass="71178">MSDKSELKAELERKKQRLAQIREEKKRKEEERKKKETDQKKEAAVSVQEESDLEKKRREAEALLQSMGLTTDSPIVFSEHWVPPPMSPSSKSVSTPSEAGSQDSGDGAVGSRTLHWDTDPSALQLHSDSDLGRGPIKLGMAKITQVDFPPREIVTYTKETQTPVTAQPKEDEEEEDDVAAPKPPVEPEEEKILKKDEENDSKAPPHELTEEEKQQILHSEEFLSFFDHSTRIVERALSEQINIFFDYSGRDLEDKEGEIQAGAKLSLNRQFFDERWSKHRVVSCLDWSSQYPELLVASYNNNEEAPHEPDGVALVWNMKYKKTTPEYVFHCQSAVMSATFAKFHPNLVVGGTYSGQIVLWDNRSNKRTPVQRTPLSAAAHTHPVYCVNVVGTQNAHNLISISTDGKICSWSLDMLSHPQDSMELVHKQSKAVAVTSMSFPVGDVNNFVVGSEEGSVYTACRHGSKAGISEMFEGHQGPITGIHCHAAVGAVDFSHLFVTSSFDWTVKLWSTKNNKPLYSFEDNSDYVYDVIGSPTHPALFACVDGMGRLDLWNLNNDTEVPTASISVEGNPALNRVRWTHSGREIAVGDSEGQIVIYDVGEQIAVPRNDEWARFGRTLAEINASRADAEEEAATRIPA</sequence>
<keyword id="KW-0002">3D-structure</keyword>
<keyword id="KW-0007">Acetylation</keyword>
<keyword id="KW-0025">Alternative splicing</keyword>
<keyword id="KW-0963">Cytoplasm</keyword>
<keyword id="KW-0206">Cytoskeleton</keyword>
<keyword id="KW-0243">Dynein</keyword>
<keyword id="KW-0493">Microtubule</keyword>
<keyword id="KW-0505">Motor protein</keyword>
<keyword id="KW-0597">Phosphoprotein</keyword>
<keyword id="KW-1185">Reference proteome</keyword>
<keyword id="KW-0677">Repeat</keyword>
<keyword id="KW-0813">Transport</keyword>
<keyword id="KW-0853">WD repeat</keyword>
<gene>
    <name type="primary">Dync1i2</name>
    <name type="synonym">Dnci2</name>
    <name type="synonym">Dncic2</name>
</gene>
<name>DC1I2_RAT</name>
<accession>Q62871</accession>
<accession>Q62872</accession>
<accession>Q62873</accession>
<reference key="1">
    <citation type="journal article" date="1995" name="J. Cell Biol.">
        <title>Cytoplasmic dynein binds dynactin through a direct interaction between the intermediate chains and p150Glued.</title>
        <authorList>
            <person name="Vaughan K.T."/>
            <person name="Vallee R.B."/>
        </authorList>
    </citation>
    <scope>NUCLEOTIDE SEQUENCE [MRNA] (ISOFORMS 2A; 2B AND 2C)</scope>
    <scope>INTERACTION WITH DCTN1</scope>
</reference>
<reference key="2">
    <citation type="journal article" date="1996" name="Mol. Biol. Cell">
        <title>Identification and developmental regulation of a neuron-specific subunit of cytoplasmic dynein.</title>
        <authorList>
            <person name="Pfister K.K."/>
            <person name="Salata M.W."/>
            <person name="Dillman J.F. III"/>
            <person name="Torre E."/>
            <person name="Lye R.J."/>
        </authorList>
    </citation>
    <scope>IDENTIFICATION IN THE CYTOPLASMIC DYNEIN 1 COMPLEX</scope>
</reference>
<reference key="3">
    <citation type="journal article" date="1998" name="Biochemistry">
        <title>Cytoplasmic dynein contains a family of differentially expressed light chains.</title>
        <authorList>
            <person name="King S.M."/>
            <person name="Barbarese E."/>
            <person name="Dillman J.F. III"/>
            <person name="Benashski S.E."/>
            <person name="Do K.T."/>
            <person name="Patel-King R.S."/>
            <person name="Pfister K.K."/>
        </authorList>
    </citation>
    <scope>IDENTIFICATION IN THE CYTOPLASMIC DYNEIN 1 COMPLEX</scope>
</reference>
<reference key="4">
    <citation type="journal article" date="2000" name="J. Biol. Chem.">
        <title>Distinct but overlapping sites within the cytoplasmic dynein heavy chain for dimerization and for intermediate chain and light intermediate chain binding.</title>
        <authorList>
            <person name="Tynan S.H."/>
            <person name="Gee M.A."/>
            <person name="Vallee R.B."/>
        </authorList>
    </citation>
    <scope>INTERACTION WITH DYNC1H1</scope>
</reference>
<reference key="5">
    <citation type="journal article" date="2001" name="J. Biol. Chem.">
        <title>Cytoplasmic dynein intermediate chain phosphorylation regulates binding to dynactin.</title>
        <authorList>
            <person name="Vaughan P.S."/>
            <person name="Leszyk J.D."/>
            <person name="Vaughan K.T."/>
        </authorList>
    </citation>
    <scope>FUNCTION</scope>
    <scope>PHOSPHORYLATION AT SER-90</scope>
    <scope>SUBCELLULAR LOCATION</scope>
    <scope>INTERACTION WITH DCTN1</scope>
    <scope>MUTAGENESIS OF SER-90</scope>
    <scope>IDENTIFICATION BY MASS SPECTROMETRY</scope>
</reference>
<reference key="6">
    <citation type="journal article" date="2007" name="J. Biol. Chem.">
        <title>Interaction of the DYNLT (TCTEX1/RP3) light chains and the intermediate chains reveals novel intersubunit regulation during assembly of the dynein complex.</title>
        <authorList>
            <person name="Lo K.W."/>
            <person name="Kogoy J.M."/>
            <person name="Rasoul B.A."/>
            <person name="King S.M."/>
            <person name="Pfister K.K."/>
        </authorList>
    </citation>
    <scope>INTERACTION WITH DYNLT1 AND DYNLT3</scope>
</reference>
<reference key="7">
    <citation type="journal article" date="2007" name="J. Neurosci. Res.">
        <title>Intermediate chain subunit as a probe for cytoplasmic dynein function: biochemical analyses and live cell imaging in PC12 cells.</title>
        <authorList>
            <person name="Myers K.R."/>
            <person name="Lo K.W."/>
            <person name="Lye R.J."/>
            <person name="Kogoy J.M."/>
            <person name="Soura V."/>
            <person name="Hafezparast M."/>
            <person name="Pfister K.K."/>
        </authorList>
    </citation>
    <scope>ALTERNATIVE SPLICING</scope>
    <scope>INTERACTION WITH DYNC1H1</scope>
</reference>
<reference key="8">
    <citation type="journal article" date="2012" name="Nat. Commun.">
        <title>Quantitative maps of protein phosphorylation sites across 14 different rat organs and tissues.</title>
        <authorList>
            <person name="Lundby A."/>
            <person name="Secher A."/>
            <person name="Lage K."/>
            <person name="Nordsborg N.B."/>
            <person name="Dmytriyev A."/>
            <person name="Lundby C."/>
            <person name="Olsen J.V."/>
        </authorList>
    </citation>
    <scope>PHOSPHORYLATION [LARGE SCALE ANALYSIS] AT SER-51 AND SER-104</scope>
    <scope>IDENTIFICATION BY MASS SPECTROMETRY [LARGE SCALE ANALYSIS]</scope>
</reference>
<reference key="9">
    <citation type="journal article" date="2016" name="J. Biol. Chem.">
        <title>Molecular basis for the protein recognition specificity of the dynein light chain DYNLT1/Tctex1: characterization of the interaction with activin receptor IIB.</title>
        <authorList>
            <person name="Merino-Gracia J."/>
            <person name="Zamora-Carreras H."/>
            <person name="Bruix M."/>
            <person name="Rodriguez-Crespo I."/>
        </authorList>
    </citation>
    <scope>INTERACTION WITH DYNLT1</scope>
</reference>
<dbReference type="EMBL" id="U39044">
    <property type="protein sequence ID" value="AAA89163.1"/>
    <property type="molecule type" value="mRNA"/>
</dbReference>
<dbReference type="EMBL" id="U39045">
    <property type="protein sequence ID" value="AAA89164.1"/>
    <property type="molecule type" value="mRNA"/>
</dbReference>
<dbReference type="EMBL" id="U39046">
    <property type="protein sequence ID" value="AAA89165.1"/>
    <property type="molecule type" value="mRNA"/>
</dbReference>
<dbReference type="PDB" id="2PG1">
    <property type="method" value="X-ray"/>
    <property type="resolution" value="2.80 A"/>
    <property type="chains" value="I/J/K/L=132-164"/>
</dbReference>
<dbReference type="PDBsum" id="2PG1"/>
<dbReference type="SMR" id="Q62871"/>
<dbReference type="CORUM" id="Q62871"/>
<dbReference type="DIP" id="DIP-36880N"/>
<dbReference type="FunCoup" id="Q62871">
    <property type="interactions" value="3079"/>
</dbReference>
<dbReference type="IntAct" id="Q62871">
    <property type="interactions" value="4"/>
</dbReference>
<dbReference type="STRING" id="10116.ENSRNOP00000060919"/>
<dbReference type="iPTMnet" id="Q62871"/>
<dbReference type="PhosphoSitePlus" id="Q62871"/>
<dbReference type="jPOST" id="Q62871"/>
<dbReference type="PaxDb" id="10116-ENSRNOP00000060919"/>
<dbReference type="PeptideAtlas" id="Q62871"/>
<dbReference type="UCSC" id="RGD:620174">
    <molecule id="Q62871-1"/>
    <property type="organism name" value="rat"/>
</dbReference>
<dbReference type="AGR" id="RGD:620174"/>
<dbReference type="RGD" id="620174">
    <property type="gene designation" value="Dync1i2"/>
</dbReference>
<dbReference type="eggNOG" id="KOG1587">
    <property type="taxonomic scope" value="Eukaryota"/>
</dbReference>
<dbReference type="InParanoid" id="Q62871"/>
<dbReference type="PhylomeDB" id="Q62871"/>
<dbReference type="Reactome" id="R-RNO-141444">
    <property type="pathway name" value="Amplification of signal from unattached kinetochores via a MAD2 inhibitory signal"/>
</dbReference>
<dbReference type="Reactome" id="R-RNO-2132295">
    <property type="pathway name" value="MHC class II antigen presentation"/>
</dbReference>
<dbReference type="Reactome" id="R-RNO-2467813">
    <property type="pathway name" value="Separation of Sister Chromatids"/>
</dbReference>
<dbReference type="Reactome" id="R-RNO-2500257">
    <property type="pathway name" value="Resolution of Sister Chromatid Cohesion"/>
</dbReference>
<dbReference type="Reactome" id="R-RNO-2565942">
    <property type="pathway name" value="Regulation of PLK1 Activity at G2/M Transition"/>
</dbReference>
<dbReference type="Reactome" id="R-RNO-3371497">
    <property type="pathway name" value="HSP90 chaperone cycle for steroid hormone receptors (SHR) in the presence of ligand"/>
</dbReference>
<dbReference type="Reactome" id="R-RNO-380259">
    <property type="pathway name" value="Loss of Nlp from mitotic centrosomes"/>
</dbReference>
<dbReference type="Reactome" id="R-RNO-380270">
    <property type="pathway name" value="Recruitment of mitotic centrosome proteins and complexes"/>
</dbReference>
<dbReference type="Reactome" id="R-RNO-380284">
    <property type="pathway name" value="Loss of proteins required for interphase microtubule organization from the centrosome"/>
</dbReference>
<dbReference type="Reactome" id="R-RNO-380320">
    <property type="pathway name" value="Recruitment of NuMA to mitotic centrosomes"/>
</dbReference>
<dbReference type="Reactome" id="R-RNO-5620912">
    <property type="pathway name" value="Anchoring of the basal body to the plasma membrane"/>
</dbReference>
<dbReference type="Reactome" id="R-RNO-5663220">
    <property type="pathway name" value="RHO GTPases Activate Formins"/>
</dbReference>
<dbReference type="Reactome" id="R-RNO-6807878">
    <property type="pathway name" value="COPI-mediated anterograde transport"/>
</dbReference>
<dbReference type="Reactome" id="R-RNO-6811436">
    <property type="pathway name" value="COPI-independent Golgi-to-ER retrograde traffic"/>
</dbReference>
<dbReference type="Reactome" id="R-RNO-68877">
    <property type="pathway name" value="Mitotic Prometaphase"/>
</dbReference>
<dbReference type="Reactome" id="R-RNO-8854518">
    <property type="pathway name" value="AURKA Activation by TPX2"/>
</dbReference>
<dbReference type="Reactome" id="R-RNO-9646399">
    <property type="pathway name" value="Aggrephagy"/>
</dbReference>
<dbReference type="Reactome" id="R-RNO-9648025">
    <property type="pathway name" value="EML4 and NUDC in mitotic spindle formation"/>
</dbReference>
<dbReference type="EvolutionaryTrace" id="Q62871"/>
<dbReference type="PRO" id="PR:Q62871"/>
<dbReference type="Proteomes" id="UP000002494">
    <property type="component" value="Unplaced"/>
</dbReference>
<dbReference type="GO" id="GO:0005813">
    <property type="term" value="C:centrosome"/>
    <property type="evidence" value="ECO:0000266"/>
    <property type="project" value="RGD"/>
</dbReference>
<dbReference type="GO" id="GO:0005868">
    <property type="term" value="C:cytoplasmic dynein complex"/>
    <property type="evidence" value="ECO:0000318"/>
    <property type="project" value="GO_Central"/>
</dbReference>
<dbReference type="GO" id="GO:0030286">
    <property type="term" value="C:dynein complex"/>
    <property type="evidence" value="ECO:0000266"/>
    <property type="project" value="RGD"/>
</dbReference>
<dbReference type="GO" id="GO:0005874">
    <property type="term" value="C:microtubule"/>
    <property type="evidence" value="ECO:0000266"/>
    <property type="project" value="RGD"/>
</dbReference>
<dbReference type="GO" id="GO:0036157">
    <property type="term" value="C:outer dynein arm"/>
    <property type="evidence" value="ECO:0000266"/>
    <property type="project" value="RGD"/>
</dbReference>
<dbReference type="GO" id="GO:0031982">
    <property type="term" value="C:vesicle"/>
    <property type="evidence" value="ECO:0000250"/>
    <property type="project" value="UniProtKB"/>
</dbReference>
<dbReference type="GO" id="GO:0045504">
    <property type="term" value="F:dynein heavy chain binding"/>
    <property type="evidence" value="ECO:0000318"/>
    <property type="project" value="GO_Central"/>
</dbReference>
<dbReference type="GO" id="GO:0045503">
    <property type="term" value="F:dynein light chain binding"/>
    <property type="evidence" value="ECO:0000318"/>
    <property type="project" value="GO_Central"/>
</dbReference>
<dbReference type="GO" id="GO:0044877">
    <property type="term" value="F:protein-containing complex binding"/>
    <property type="evidence" value="ECO:0000353"/>
    <property type="project" value="RGD"/>
</dbReference>
<dbReference type="GO" id="GO:1990090">
    <property type="term" value="P:cellular response to nerve growth factor stimulus"/>
    <property type="evidence" value="ECO:0000270"/>
    <property type="project" value="RGD"/>
</dbReference>
<dbReference type="GO" id="GO:0007018">
    <property type="term" value="P:microtubule-based movement"/>
    <property type="evidence" value="ECO:0000304"/>
    <property type="project" value="RGD"/>
</dbReference>
<dbReference type="GO" id="GO:0010977">
    <property type="term" value="P:negative regulation of neuron projection development"/>
    <property type="evidence" value="ECO:0000315"/>
    <property type="project" value="RGD"/>
</dbReference>
<dbReference type="GO" id="GO:0010970">
    <property type="term" value="P:transport along microtubule"/>
    <property type="evidence" value="ECO:0000318"/>
    <property type="project" value="GO_Central"/>
</dbReference>
<dbReference type="FunFam" id="2.130.10.10:FF:000095">
    <property type="entry name" value="Cytoplasmic dynein 1 intermediate chain 2"/>
    <property type="match status" value="1"/>
</dbReference>
<dbReference type="FunFam" id="2.130.10.10:FF:000026">
    <property type="entry name" value="cytoplasmic dynein 1 intermediate chain 2 isoform X2"/>
    <property type="match status" value="1"/>
</dbReference>
<dbReference type="Gene3D" id="2.130.10.10">
    <property type="entry name" value="YVTN repeat-like/Quinoprotein amine dehydrogenase"/>
    <property type="match status" value="2"/>
</dbReference>
<dbReference type="InterPro" id="IPR025956">
    <property type="entry name" value="DYNC1I1/DYNC1I2"/>
</dbReference>
<dbReference type="InterPro" id="IPR050687">
    <property type="entry name" value="Dynein_IC"/>
</dbReference>
<dbReference type="InterPro" id="IPR015943">
    <property type="entry name" value="WD40/YVTN_repeat-like_dom_sf"/>
</dbReference>
<dbReference type="InterPro" id="IPR036322">
    <property type="entry name" value="WD40_repeat_dom_sf"/>
</dbReference>
<dbReference type="InterPro" id="IPR001680">
    <property type="entry name" value="WD40_rpt"/>
</dbReference>
<dbReference type="PANTHER" id="PTHR12442:SF37">
    <property type="entry name" value="CYTOPLASMIC DYNEIN 1 INTERMEDIATE CHAIN 2"/>
    <property type="match status" value="1"/>
</dbReference>
<dbReference type="PANTHER" id="PTHR12442">
    <property type="entry name" value="DYNEIN INTERMEDIATE CHAIN"/>
    <property type="match status" value="1"/>
</dbReference>
<dbReference type="Pfam" id="PF11540">
    <property type="entry name" value="Dynein_IC2"/>
    <property type="match status" value="1"/>
</dbReference>
<dbReference type="Pfam" id="PF00400">
    <property type="entry name" value="WD40"/>
    <property type="match status" value="1"/>
</dbReference>
<dbReference type="SMART" id="SM00320">
    <property type="entry name" value="WD40"/>
    <property type="match status" value="5"/>
</dbReference>
<dbReference type="SUPFAM" id="SSF50978">
    <property type="entry name" value="WD40 repeat-like"/>
    <property type="match status" value="1"/>
</dbReference>
<dbReference type="PROSITE" id="PS50082">
    <property type="entry name" value="WD_REPEATS_2"/>
    <property type="match status" value="1"/>
</dbReference>
<dbReference type="PROSITE" id="PS50294">
    <property type="entry name" value="WD_REPEATS_REGION"/>
    <property type="match status" value="1"/>
</dbReference>
<organism>
    <name type="scientific">Rattus norvegicus</name>
    <name type="common">Rat</name>
    <dbReference type="NCBI Taxonomy" id="10116"/>
    <lineage>
        <taxon>Eukaryota</taxon>
        <taxon>Metazoa</taxon>
        <taxon>Chordata</taxon>
        <taxon>Craniata</taxon>
        <taxon>Vertebrata</taxon>
        <taxon>Euteleostomi</taxon>
        <taxon>Mammalia</taxon>
        <taxon>Eutheria</taxon>
        <taxon>Euarchontoglires</taxon>
        <taxon>Glires</taxon>
        <taxon>Rodentia</taxon>
        <taxon>Myomorpha</taxon>
        <taxon>Muroidea</taxon>
        <taxon>Muridae</taxon>
        <taxon>Murinae</taxon>
        <taxon>Rattus</taxon>
    </lineage>
</organism>
<proteinExistence type="evidence at protein level"/>
<feature type="initiator methionine" description="Removed" evidence="2">
    <location>
        <position position="1"/>
    </location>
</feature>
<feature type="chain" id="PRO_0000114657" description="Cytoplasmic dynein 1 intermediate chain 2">
    <location>
        <begin position="2"/>
        <end position="638"/>
    </location>
</feature>
<feature type="repeat" description="WD 1">
    <location>
        <begin position="277"/>
        <end position="326"/>
    </location>
</feature>
<feature type="repeat" description="WD 2">
    <location>
        <begin position="330"/>
        <end position="370"/>
    </location>
</feature>
<feature type="repeat" description="WD 3">
    <location>
        <begin position="379"/>
        <end position="420"/>
    </location>
</feature>
<feature type="repeat" description="WD 4">
    <location>
        <begin position="429"/>
        <end position="469"/>
    </location>
</feature>
<feature type="repeat" description="WD 5">
    <location>
        <begin position="474"/>
        <end position="519"/>
    </location>
</feature>
<feature type="repeat" description="WD 6">
    <location>
        <begin position="568"/>
        <end position="607"/>
    </location>
</feature>
<feature type="region of interest" description="Disordered" evidence="3">
    <location>
        <begin position="1"/>
        <end position="135"/>
    </location>
</feature>
<feature type="region of interest" description="Interaction with DYNLT1" evidence="8">
    <location>
        <begin position="133"/>
        <end position="165"/>
    </location>
</feature>
<feature type="region of interest" description="Disordered" evidence="3">
    <location>
        <begin position="154"/>
        <end position="209"/>
    </location>
</feature>
<feature type="compositionally biased region" description="Basic and acidic residues" evidence="3">
    <location>
        <begin position="1"/>
        <end position="13"/>
    </location>
</feature>
<feature type="compositionally biased region" description="Basic and acidic residues" evidence="3">
    <location>
        <begin position="20"/>
        <end position="43"/>
    </location>
</feature>
<feature type="compositionally biased region" description="Low complexity" evidence="3">
    <location>
        <begin position="88"/>
        <end position="97"/>
    </location>
</feature>
<feature type="compositionally biased region" description="Basic and acidic residues" evidence="3">
    <location>
        <begin position="190"/>
        <end position="209"/>
    </location>
</feature>
<feature type="modified residue" description="N-acetylserine" evidence="2">
    <location>
        <position position="2"/>
    </location>
</feature>
<feature type="modified residue" description="Diphosphoserine" evidence="1">
    <location>
        <position position="51"/>
    </location>
</feature>
<feature type="modified residue" description="Phosphoserine" evidence="14">
    <location>
        <position position="51"/>
    </location>
</feature>
<feature type="modified residue" description="Phosphoserine" evidence="5">
    <location>
        <position position="90"/>
    </location>
</feature>
<feature type="modified residue" description="Phosphothreonine" evidence="2">
    <location>
        <position position="95"/>
    </location>
</feature>
<feature type="modified residue" description="Phosphoserine" evidence="2">
    <location>
        <position position="97"/>
    </location>
</feature>
<feature type="modified residue" description="Phosphoserine" evidence="2">
    <location>
        <position position="101"/>
    </location>
</feature>
<feature type="modified residue" description="Phosphoserine" evidence="14">
    <location>
        <position position="104"/>
    </location>
</feature>
<feature type="splice variant" id="VSP_001339" description="In isoform 2B and isoform 2C." evidence="12">
    <location>
        <begin position="77"/>
        <end position="82"/>
    </location>
</feature>
<feature type="splice variant" id="VSP_001340" description="In isoform 2C." evidence="12">
    <location>
        <begin position="113"/>
        <end position="132"/>
    </location>
</feature>
<feature type="mutagenesis site" description="No effect on interaction with DCTN1 (mimicks dephosphorylated form)." evidence="5">
    <original>S</original>
    <variation>A</variation>
    <location>
        <position position="90"/>
    </location>
</feature>
<feature type="mutagenesis site" description="Impairs interaction with DCTN1 (mimicks phosphorylated form)." evidence="5">
    <original>S</original>
    <variation>D</variation>
    <location>
        <position position="90"/>
    </location>
</feature>
<feature type="strand" evidence="15">
    <location>
        <begin position="144"/>
        <end position="148"/>
    </location>
</feature>
<feature type="strand" evidence="15">
    <location>
        <begin position="155"/>
        <end position="161"/>
    </location>
</feature>